<evidence type="ECO:0000250" key="1"/>
<evidence type="ECO:0000255" key="2">
    <source>
        <dbReference type="PROSITE-ProRule" id="PRU00775"/>
    </source>
</evidence>
<evidence type="ECO:0000269" key="3">
    <source>
    </source>
</evidence>
<evidence type="ECO:0000269" key="4">
    <source>
    </source>
</evidence>
<evidence type="ECO:0000303" key="5">
    <source>
    </source>
</evidence>
<comment type="function">
    <text>Rod-core linker protein required for attachment of phycocyanin to allophycocyanin in cores of phycobilisomes.</text>
</comment>
<comment type="function">
    <text>Linker polypeptides determine the state of aggregation and the location of the disk-shaped phycobiliprotein units within the phycobilisome and modulate their spectroscopic properties in order to mediate a directed and optimal energy transfer.</text>
</comment>
<comment type="subunit">
    <text evidence="3 4">Part of the phycobilisome, a hemidiscoidal structure that is composed of two distinct substructures: a core complex and a number of rods radiating from the core.</text>
</comment>
<comment type="subcellular location">
    <subcellularLocation>
        <location evidence="4">Cellular thylakoid membrane</location>
        <topology evidence="1">Peripheral membrane protein</topology>
        <orientation evidence="1">Cytoplasmic side</orientation>
    </subcellularLocation>
    <text evidence="4">Part of a phycobilisome rod.</text>
</comment>
<comment type="similarity">
    <text evidence="2">Belongs to the phycobilisome linker protein family.</text>
</comment>
<feature type="initiator methionine" description="Removed" evidence="3 4">
    <location>
        <position position="1"/>
    </location>
</feature>
<feature type="chain" id="PRO_0000199244" description="Phycobilisome rod-core linker polypeptide CpcG1">
    <location>
        <begin position="2"/>
        <end position="279"/>
    </location>
</feature>
<feature type="domain" description="PBS-linker" evidence="2">
    <location>
        <begin position="11"/>
        <end position="189"/>
    </location>
</feature>
<feature type="sequence conflict" description="In Ref. 1; AAA22036/AAG09322." ref="1">
    <original>E</original>
    <variation>Q</variation>
    <location>
        <position position="7"/>
    </location>
</feature>
<name>PYG1_NOSS1</name>
<accession>P29986</accession>
<reference key="1">
    <citation type="journal article" date="1991" name="Gene">
        <title>A small multigene family encodes the rod-core linker polypeptides of Anabaena sp. PCC7120 phycobilisomes.</title>
        <authorList>
            <person name="Bryant D.A."/>
            <person name="Stirewalt V.L."/>
            <person name="Glauser M."/>
            <person name="Frank G."/>
            <person name="Sidler W."/>
            <person name="Zuber H."/>
        </authorList>
    </citation>
    <scope>NUCLEOTIDE SEQUENCE [GENOMIC DNA]</scope>
    <scope>PROTEIN SEQUENCE OF 2-13</scope>
    <scope>SUBUNIT</scope>
    <source>
        <strain>PCC 7120 / SAG 25.82 / UTEX 2576</strain>
    </source>
</reference>
<reference key="2">
    <citation type="journal article" date="2001" name="Anal. Biochem.">
        <title>Recombinant phycobiliproteins. Recombinant C-phycocyanins equipped with affinity tags, oligomerization, and biospecific recognition domains.</title>
        <authorList>
            <person name="Cai Y.A."/>
            <person name="Murphy J.T."/>
            <person name="Wedemayer G.J."/>
            <person name="Glazer A.N."/>
        </authorList>
    </citation>
    <scope>NUCLEOTIDE SEQUENCE [GENOMIC DNA]</scope>
</reference>
<reference key="3">
    <citation type="journal article" date="2001" name="DNA Res.">
        <title>Complete genomic sequence of the filamentous nitrogen-fixing cyanobacterium Anabaena sp. strain PCC 7120.</title>
        <authorList>
            <person name="Kaneko T."/>
            <person name="Nakamura Y."/>
            <person name="Wolk C.P."/>
            <person name="Kuritz T."/>
            <person name="Sasamoto S."/>
            <person name="Watanabe A."/>
            <person name="Iriguchi M."/>
            <person name="Ishikawa A."/>
            <person name="Kawashima K."/>
            <person name="Kimura T."/>
            <person name="Kishida Y."/>
            <person name="Kohara M."/>
            <person name="Matsumoto M."/>
            <person name="Matsuno A."/>
            <person name="Muraki A."/>
            <person name="Nakazaki N."/>
            <person name="Shimpo S."/>
            <person name="Sugimoto M."/>
            <person name="Takazawa M."/>
            <person name="Yamada M."/>
            <person name="Yasuda M."/>
            <person name="Tabata S."/>
        </authorList>
    </citation>
    <scope>NUCLEOTIDE SEQUENCE [LARGE SCALE GENOMIC DNA]</scope>
    <source>
        <strain>PCC 7120 / SAG 25.82 / UTEX 2576</strain>
    </source>
</reference>
<reference key="4">
    <citation type="journal article" date="2014" name="Proc. Natl. Acad. Sci. U.S.A.">
        <title>Attachment of phycobilisomes in an antenna-photosystem I supercomplex of cyanobacteria.</title>
        <authorList>
            <person name="Watanabe M."/>
            <person name="Semchonok D.A."/>
            <person name="Webber-Birungi M.T."/>
            <person name="Ehira S."/>
            <person name="Kondo K."/>
            <person name="Narikawa R."/>
            <person name="Ohmori M."/>
            <person name="Boekema E.J."/>
            <person name="Ikeuchi M."/>
        </authorList>
    </citation>
    <scope>PROTEIN SEQUENCE OF 2-14</scope>
    <scope>SUBUNIT</scope>
    <scope>SUBCELLULAR LOCATION</scope>
    <source>
        <strain>PCC 7120 / SAG 25.82 / UTEX 2576</strain>
    </source>
</reference>
<sequence length="279" mass="31934">MSIPLLEYAPSSQNQRVEGYEVPNEDTPTIYRLAAAIDDADVDAIIWAGYRQIFSEHLIIKSNRQSFLESQLRNRAINVRDFIRGLGKSEVYRTQVADLNSNYRLVDITLKRFLGRAAYNQDEEIAWSIVIGSQGLHGFIDALLDSDEYRENFGDDIVPYQRRRYKDRPFNLVNPRYNAYWRDRQTLNALGGRSFYSARTSGTLTKDDIRRAIPANFMALAGKILTPERNYQRTIASVTSQIKDIKIPDTSREVTTPEVTVKPVAVALPYRYIPGNKTT</sequence>
<proteinExistence type="evidence at protein level"/>
<keyword id="KW-0002">3D-structure</keyword>
<keyword id="KW-0042">Antenna complex</keyword>
<keyword id="KW-0903">Direct protein sequencing</keyword>
<keyword id="KW-0472">Membrane</keyword>
<keyword id="KW-0602">Photosynthesis</keyword>
<keyword id="KW-0605">Phycobilisome</keyword>
<keyword id="KW-1185">Reference proteome</keyword>
<keyword id="KW-0793">Thylakoid</keyword>
<organism>
    <name type="scientific">Nostoc sp. (strain PCC 7120 / SAG 25.82 / UTEX 2576)</name>
    <dbReference type="NCBI Taxonomy" id="103690"/>
    <lineage>
        <taxon>Bacteria</taxon>
        <taxon>Bacillati</taxon>
        <taxon>Cyanobacteriota</taxon>
        <taxon>Cyanophyceae</taxon>
        <taxon>Nostocales</taxon>
        <taxon>Nostocaceae</taxon>
        <taxon>Nostoc</taxon>
    </lineage>
</organism>
<dbReference type="EMBL" id="M80435">
    <property type="protein sequence ID" value="AAA22036.1"/>
    <property type="molecule type" value="Genomic_DNA"/>
</dbReference>
<dbReference type="EMBL" id="AF178757">
    <property type="protein sequence ID" value="AAG09322.1"/>
    <property type="molecule type" value="Genomic_DNA"/>
</dbReference>
<dbReference type="EMBL" id="BA000019">
    <property type="protein sequence ID" value="BAB72492.1"/>
    <property type="molecule type" value="Genomic_DNA"/>
</dbReference>
<dbReference type="PIR" id="AE1873">
    <property type="entry name" value="AE1873"/>
</dbReference>
<dbReference type="PIR" id="JS0592">
    <property type="entry name" value="JS0592"/>
</dbReference>
<dbReference type="RefSeq" id="WP_010994710.1">
    <property type="nucleotide sequence ID" value="NZ_RSCN01000059.1"/>
</dbReference>
<dbReference type="PDB" id="7EYD">
    <property type="method" value="EM"/>
    <property type="resolution" value="3.90 A"/>
    <property type="chains" value="A3/A7=1-279"/>
</dbReference>
<dbReference type="PDBsum" id="7EYD"/>
<dbReference type="EMDB" id="EMD-31381"/>
<dbReference type="SMR" id="P29986"/>
<dbReference type="STRING" id="103690.gene:10492545"/>
<dbReference type="KEGG" id="ana:alr0534"/>
<dbReference type="eggNOG" id="COG0448">
    <property type="taxonomic scope" value="Bacteria"/>
</dbReference>
<dbReference type="OrthoDB" id="448032at2"/>
<dbReference type="Proteomes" id="UP000002483">
    <property type="component" value="Chromosome"/>
</dbReference>
<dbReference type="GO" id="GO:0030089">
    <property type="term" value="C:phycobilisome"/>
    <property type="evidence" value="ECO:0007669"/>
    <property type="project" value="UniProtKB-KW"/>
</dbReference>
<dbReference type="GO" id="GO:0031676">
    <property type="term" value="C:plasma membrane-derived thylakoid membrane"/>
    <property type="evidence" value="ECO:0007669"/>
    <property type="project" value="UniProtKB-SubCell"/>
</dbReference>
<dbReference type="GO" id="GO:0015979">
    <property type="term" value="P:photosynthesis"/>
    <property type="evidence" value="ECO:0007669"/>
    <property type="project" value="UniProtKB-KW"/>
</dbReference>
<dbReference type="Gene3D" id="1.10.3130.20">
    <property type="entry name" value="Phycobilisome linker domain"/>
    <property type="match status" value="1"/>
</dbReference>
<dbReference type="InterPro" id="IPR001297">
    <property type="entry name" value="PBS_linker_dom"/>
</dbReference>
<dbReference type="InterPro" id="IPR038255">
    <property type="entry name" value="PBS_linker_sf"/>
</dbReference>
<dbReference type="InterPro" id="IPR016470">
    <property type="entry name" value="Phycobilisome"/>
</dbReference>
<dbReference type="PANTHER" id="PTHR34011">
    <property type="entry name" value="PHYCOBILISOME 32.1 KDA LINKER POLYPEPTIDE, PHYCOCYANIN-ASSOCIATED, ROD 2-RELATED"/>
    <property type="match status" value="1"/>
</dbReference>
<dbReference type="Pfam" id="PF00427">
    <property type="entry name" value="PBS_linker_poly"/>
    <property type="match status" value="1"/>
</dbReference>
<dbReference type="PIRSF" id="PIRSF005898">
    <property type="entry name" value="Phycobilisome_CpeC/CpcI"/>
    <property type="match status" value="1"/>
</dbReference>
<dbReference type="PROSITE" id="PS51445">
    <property type="entry name" value="PBS_LINKER"/>
    <property type="match status" value="1"/>
</dbReference>
<protein>
    <recommendedName>
        <fullName>Phycobilisome rod-core linker polypeptide CpcG1</fullName>
    </recommendedName>
    <alternativeName>
        <fullName>L-RC 31.8</fullName>
    </alternativeName>
</protein>
<gene>
    <name evidence="5" type="primary">cpcG1</name>
    <name type="ordered locus">alr0534</name>
</gene>